<comment type="function">
    <text evidence="1">One of the primary rRNA binding proteins, it binds directly to 16S rRNA where it nucleates assembly of the body of the 30S subunit.</text>
</comment>
<comment type="function">
    <text evidence="1">With S5 and S12 plays an important role in translational accuracy.</text>
</comment>
<comment type="subunit">
    <text evidence="1">Part of the 30S ribosomal subunit. Contacts protein S5. The interaction surface between S4 and S5 is involved in control of translational fidelity.</text>
</comment>
<comment type="similarity">
    <text evidence="1">Belongs to the universal ribosomal protein uS4 family.</text>
</comment>
<organism>
    <name type="scientific">Chlorobium phaeovibrioides (strain DSM 265 / 1930)</name>
    <name type="common">Prosthecochloris vibrioformis (strain DSM 265)</name>
    <dbReference type="NCBI Taxonomy" id="290318"/>
    <lineage>
        <taxon>Bacteria</taxon>
        <taxon>Pseudomonadati</taxon>
        <taxon>Chlorobiota</taxon>
        <taxon>Chlorobiia</taxon>
        <taxon>Chlorobiales</taxon>
        <taxon>Chlorobiaceae</taxon>
        <taxon>Chlorobium/Pelodictyon group</taxon>
        <taxon>Chlorobium</taxon>
    </lineage>
</organism>
<feature type="chain" id="PRO_1000085985" description="Small ribosomal subunit protein uS4">
    <location>
        <begin position="1"/>
        <end position="203"/>
    </location>
</feature>
<feature type="domain" description="S4 RNA-binding" evidence="1">
    <location>
        <begin position="93"/>
        <end position="153"/>
    </location>
</feature>
<reference key="1">
    <citation type="submission" date="2007-03" db="EMBL/GenBank/DDBJ databases">
        <title>Complete sequence of Prosthecochloris vibrioformis DSM 265.</title>
        <authorList>
            <consortium name="US DOE Joint Genome Institute"/>
            <person name="Copeland A."/>
            <person name="Lucas S."/>
            <person name="Lapidus A."/>
            <person name="Barry K."/>
            <person name="Detter J.C."/>
            <person name="Glavina del Rio T."/>
            <person name="Hammon N."/>
            <person name="Israni S."/>
            <person name="Pitluck S."/>
            <person name="Schmutz J."/>
            <person name="Larimer F."/>
            <person name="Land M."/>
            <person name="Hauser L."/>
            <person name="Mikhailova N."/>
            <person name="Li T."/>
            <person name="Overmann J."/>
            <person name="Schuster S.C."/>
            <person name="Bryant D.A."/>
            <person name="Richardson P."/>
        </authorList>
    </citation>
    <scope>NUCLEOTIDE SEQUENCE [LARGE SCALE GENOMIC DNA]</scope>
    <source>
        <strain>DSM 265 / 1930</strain>
    </source>
</reference>
<protein>
    <recommendedName>
        <fullName evidence="1">Small ribosomal subunit protein uS4</fullName>
    </recommendedName>
    <alternativeName>
        <fullName evidence="2">30S ribosomal protein S4</fullName>
    </alternativeName>
</protein>
<dbReference type="EMBL" id="CP000607">
    <property type="protein sequence ID" value="ABP36294.1"/>
    <property type="molecule type" value="Genomic_DNA"/>
</dbReference>
<dbReference type="SMR" id="A4SCT5"/>
<dbReference type="STRING" id="290318.Cvib_0272"/>
<dbReference type="KEGG" id="pvi:Cvib_0272"/>
<dbReference type="eggNOG" id="COG0522">
    <property type="taxonomic scope" value="Bacteria"/>
</dbReference>
<dbReference type="HOGENOM" id="CLU_092403_0_2_10"/>
<dbReference type="OrthoDB" id="9803672at2"/>
<dbReference type="GO" id="GO:0015935">
    <property type="term" value="C:small ribosomal subunit"/>
    <property type="evidence" value="ECO:0007669"/>
    <property type="project" value="InterPro"/>
</dbReference>
<dbReference type="GO" id="GO:0019843">
    <property type="term" value="F:rRNA binding"/>
    <property type="evidence" value="ECO:0007669"/>
    <property type="project" value="UniProtKB-UniRule"/>
</dbReference>
<dbReference type="GO" id="GO:0003735">
    <property type="term" value="F:structural constituent of ribosome"/>
    <property type="evidence" value="ECO:0007669"/>
    <property type="project" value="InterPro"/>
</dbReference>
<dbReference type="GO" id="GO:0042274">
    <property type="term" value="P:ribosomal small subunit biogenesis"/>
    <property type="evidence" value="ECO:0007669"/>
    <property type="project" value="TreeGrafter"/>
</dbReference>
<dbReference type="GO" id="GO:0006412">
    <property type="term" value="P:translation"/>
    <property type="evidence" value="ECO:0007669"/>
    <property type="project" value="UniProtKB-UniRule"/>
</dbReference>
<dbReference type="CDD" id="cd00165">
    <property type="entry name" value="S4"/>
    <property type="match status" value="1"/>
</dbReference>
<dbReference type="FunFam" id="3.10.290.10:FF:000001">
    <property type="entry name" value="30S ribosomal protein S4"/>
    <property type="match status" value="1"/>
</dbReference>
<dbReference type="Gene3D" id="1.10.1050.10">
    <property type="entry name" value="Ribosomal Protein S4 Delta 41, Chain A, domain 1"/>
    <property type="match status" value="1"/>
</dbReference>
<dbReference type="Gene3D" id="3.10.290.10">
    <property type="entry name" value="RNA-binding S4 domain"/>
    <property type="match status" value="1"/>
</dbReference>
<dbReference type="HAMAP" id="MF_01306_B">
    <property type="entry name" value="Ribosomal_uS4_B"/>
    <property type="match status" value="1"/>
</dbReference>
<dbReference type="InterPro" id="IPR022801">
    <property type="entry name" value="Ribosomal_uS4"/>
</dbReference>
<dbReference type="InterPro" id="IPR005709">
    <property type="entry name" value="Ribosomal_uS4_bac-type"/>
</dbReference>
<dbReference type="InterPro" id="IPR001912">
    <property type="entry name" value="Ribosomal_uS4_N"/>
</dbReference>
<dbReference type="InterPro" id="IPR002942">
    <property type="entry name" value="S4_RNA-bd"/>
</dbReference>
<dbReference type="InterPro" id="IPR036986">
    <property type="entry name" value="S4_RNA-bd_sf"/>
</dbReference>
<dbReference type="NCBIfam" id="NF003717">
    <property type="entry name" value="PRK05327.1"/>
    <property type="match status" value="1"/>
</dbReference>
<dbReference type="NCBIfam" id="TIGR01017">
    <property type="entry name" value="rpsD_bact"/>
    <property type="match status" value="1"/>
</dbReference>
<dbReference type="PANTHER" id="PTHR11831">
    <property type="entry name" value="30S 40S RIBOSOMAL PROTEIN"/>
    <property type="match status" value="1"/>
</dbReference>
<dbReference type="PANTHER" id="PTHR11831:SF4">
    <property type="entry name" value="SMALL RIBOSOMAL SUBUNIT PROTEIN US4M"/>
    <property type="match status" value="1"/>
</dbReference>
<dbReference type="Pfam" id="PF00163">
    <property type="entry name" value="Ribosomal_S4"/>
    <property type="match status" value="1"/>
</dbReference>
<dbReference type="Pfam" id="PF01479">
    <property type="entry name" value="S4"/>
    <property type="match status" value="1"/>
</dbReference>
<dbReference type="SMART" id="SM01390">
    <property type="entry name" value="Ribosomal_S4"/>
    <property type="match status" value="1"/>
</dbReference>
<dbReference type="SMART" id="SM00363">
    <property type="entry name" value="S4"/>
    <property type="match status" value="1"/>
</dbReference>
<dbReference type="SUPFAM" id="SSF55174">
    <property type="entry name" value="Alpha-L RNA-binding motif"/>
    <property type="match status" value="1"/>
</dbReference>
<dbReference type="PROSITE" id="PS50889">
    <property type="entry name" value="S4"/>
    <property type="match status" value="1"/>
</dbReference>
<accession>A4SCT5</accession>
<name>RS4_CHLPM</name>
<sequence length="203" mass="23168">MARFRGSITKVSRRLGIALTPKAEKYMERRPFAPGQHGQGRRSKVSEYALQLREKQKMKYLYGILEKQFRNYYKKAVSQRGVTGDNLVRLIERRFDNVVFRAGFAPSRAGSRQLVSHGHLLVNGKKVNIPSYMVSPGDLIEFRPKSKNMSAVSDALSKTPDARIPSWIQVDKANQKAVFLAVPERVEVQEPFNEQLVVELYSK</sequence>
<keyword id="KW-0687">Ribonucleoprotein</keyword>
<keyword id="KW-0689">Ribosomal protein</keyword>
<keyword id="KW-0694">RNA-binding</keyword>
<keyword id="KW-0699">rRNA-binding</keyword>
<proteinExistence type="inferred from homology"/>
<gene>
    <name evidence="1" type="primary">rpsD</name>
    <name type="ordered locus">Cvib_0272</name>
</gene>
<evidence type="ECO:0000255" key="1">
    <source>
        <dbReference type="HAMAP-Rule" id="MF_01306"/>
    </source>
</evidence>
<evidence type="ECO:0000305" key="2"/>